<name>UDB13_RABIT</name>
<feature type="signal peptide">
    <location>
        <begin position="1"/>
        <end position="24"/>
    </location>
</feature>
<feature type="chain" id="PRO_0000036037" description="UDP-glucuronosyltransferase 2B13">
    <location>
        <begin position="25"/>
        <end position="531"/>
    </location>
</feature>
<feature type="transmembrane region" description="Helical" evidence="1">
    <location>
        <begin position="495"/>
        <end position="511"/>
    </location>
</feature>
<feature type="glycosylation site" description="N-linked (GlcNAc...) asparagine" evidence="1">
    <location>
        <position position="69"/>
    </location>
</feature>
<feature type="glycosylation site" description="N-linked (GlcNAc...) asparagine" evidence="1">
    <location>
        <position position="101"/>
    </location>
</feature>
<feature type="glycosylation site" description="N-linked (GlcNAc...) asparagine" evidence="1">
    <location>
        <position position="317"/>
    </location>
</feature>
<organism>
    <name type="scientific">Oryctolagus cuniculus</name>
    <name type="common">Rabbit</name>
    <dbReference type="NCBI Taxonomy" id="9986"/>
    <lineage>
        <taxon>Eukaryota</taxon>
        <taxon>Metazoa</taxon>
        <taxon>Chordata</taxon>
        <taxon>Craniata</taxon>
        <taxon>Vertebrata</taxon>
        <taxon>Euteleostomi</taxon>
        <taxon>Mammalia</taxon>
        <taxon>Eutheria</taxon>
        <taxon>Euarchontoglires</taxon>
        <taxon>Glires</taxon>
        <taxon>Lagomorpha</taxon>
        <taxon>Leporidae</taxon>
        <taxon>Oryctolagus</taxon>
    </lineage>
</organism>
<evidence type="ECO:0000255" key="1"/>
<evidence type="ECO:0000305" key="2"/>
<dbReference type="EC" id="2.4.1.17"/>
<dbReference type="EMBL" id="L01081">
    <property type="protein sequence ID" value="AAA18020.1"/>
    <property type="molecule type" value="mRNA"/>
</dbReference>
<dbReference type="PIR" id="B47113">
    <property type="entry name" value="B47113"/>
</dbReference>
<dbReference type="RefSeq" id="NP_001164485.1">
    <property type="nucleotide sequence ID" value="NM_001171014.1"/>
</dbReference>
<dbReference type="SMR" id="P36512"/>
<dbReference type="CAZy" id="GT1">
    <property type="family name" value="Glycosyltransferase Family 1"/>
</dbReference>
<dbReference type="GlyCosmos" id="P36512">
    <property type="glycosylation" value="3 sites, No reported glycans"/>
</dbReference>
<dbReference type="PaxDb" id="9986-ENSOCUP00000021284"/>
<dbReference type="GeneID" id="100328586"/>
<dbReference type="KEGG" id="ocu:100328586"/>
<dbReference type="CTD" id="100328586"/>
<dbReference type="eggNOG" id="KOG1192">
    <property type="taxonomic scope" value="Eukaryota"/>
</dbReference>
<dbReference type="InParanoid" id="P36512"/>
<dbReference type="OrthoDB" id="5835829at2759"/>
<dbReference type="Proteomes" id="UP000001811">
    <property type="component" value="Unplaced"/>
</dbReference>
<dbReference type="GO" id="GO:0005789">
    <property type="term" value="C:endoplasmic reticulum membrane"/>
    <property type="evidence" value="ECO:0007669"/>
    <property type="project" value="UniProtKB-SubCell"/>
</dbReference>
<dbReference type="GO" id="GO:0015020">
    <property type="term" value="F:glucuronosyltransferase activity"/>
    <property type="evidence" value="ECO:0007669"/>
    <property type="project" value="UniProtKB-EC"/>
</dbReference>
<dbReference type="CDD" id="cd03784">
    <property type="entry name" value="GT1_Gtf-like"/>
    <property type="match status" value="1"/>
</dbReference>
<dbReference type="FunFam" id="3.40.50.2000:FF:000001">
    <property type="entry name" value="UDP-glucuronosyltransferase"/>
    <property type="match status" value="1"/>
</dbReference>
<dbReference type="FunFam" id="3.40.50.2000:FF:000081">
    <property type="entry name" value="UDP-glucuronosyltransferase 2A2"/>
    <property type="match status" value="1"/>
</dbReference>
<dbReference type="Gene3D" id="3.40.50.2000">
    <property type="entry name" value="Glycogen Phosphorylase B"/>
    <property type="match status" value="2"/>
</dbReference>
<dbReference type="InterPro" id="IPR050271">
    <property type="entry name" value="UDP-glycosyltransferase"/>
</dbReference>
<dbReference type="InterPro" id="IPR002213">
    <property type="entry name" value="UDP_glucos_trans"/>
</dbReference>
<dbReference type="InterPro" id="IPR035595">
    <property type="entry name" value="UDP_glycos_trans_CS"/>
</dbReference>
<dbReference type="PANTHER" id="PTHR48043">
    <property type="entry name" value="EG:EG0003.4 PROTEIN-RELATED"/>
    <property type="match status" value="1"/>
</dbReference>
<dbReference type="PANTHER" id="PTHR48043:SF12">
    <property type="entry name" value="UDP-GLUCURONOSYLTRANSFERASE 2B4"/>
    <property type="match status" value="1"/>
</dbReference>
<dbReference type="Pfam" id="PF00201">
    <property type="entry name" value="UDPGT"/>
    <property type="match status" value="1"/>
</dbReference>
<dbReference type="SUPFAM" id="SSF53756">
    <property type="entry name" value="UDP-Glycosyltransferase/glycogen phosphorylase"/>
    <property type="match status" value="1"/>
</dbReference>
<dbReference type="PROSITE" id="PS00375">
    <property type="entry name" value="UDPGT"/>
    <property type="match status" value="1"/>
</dbReference>
<reference key="1">
    <citation type="journal article" date="1993" name="J. Biol. Chem.">
        <title>Cloning and characterization of rabbit liver UDP-glucuronosyltransferase cDNAs. Developmental and inducible expression of 4-hydroxybiphenyl UGT2B13.</title>
        <authorList>
            <person name="Tukey R.H."/>
            <person name="Pendurthi U.R."/>
            <person name="Nguyen N.T."/>
            <person name="Green M.D."/>
            <person name="Tephly T.R."/>
        </authorList>
    </citation>
    <scope>NUCLEOTIDE SEQUENCE [MRNA]</scope>
    <source>
        <strain>New Zealand white</strain>
        <tissue>Liver</tissue>
    </source>
</reference>
<keyword id="KW-0256">Endoplasmic reticulum</keyword>
<keyword id="KW-0325">Glycoprotein</keyword>
<keyword id="KW-0328">Glycosyltransferase</keyword>
<keyword id="KW-0472">Membrane</keyword>
<keyword id="KW-0492">Microsome</keyword>
<keyword id="KW-1185">Reference proteome</keyword>
<keyword id="KW-0732">Signal</keyword>
<keyword id="KW-0808">Transferase</keyword>
<keyword id="KW-0812">Transmembrane</keyword>
<keyword id="KW-1133">Transmembrane helix</keyword>
<protein>
    <recommendedName>
        <fullName>UDP-glucuronosyltransferase 2B13</fullName>
        <shortName>UDPGT 2B13</shortName>
        <ecNumber>2.4.1.17</ecNumber>
    </recommendedName>
    <alternativeName>
        <fullName>EGT10</fullName>
    </alternativeName>
</protein>
<comment type="function">
    <text>UDPGT is of major importance in the conjugation and subsequent elimination of potentially toxic xenobiotics and endogenous compounds. Acts on small phenolic agents such as 2-beta-naphthol and 4-methylumbelliferone as well as bulky phenolic compounds like 2-hydroxy- and 4-hydroxybiphenyl. In contrast to 2B16 it is active toward octylgallate.</text>
</comment>
<comment type="catalytic activity">
    <reaction>
        <text>glucuronate acceptor + UDP-alpha-D-glucuronate = acceptor beta-D-glucuronoside + UDP + H(+)</text>
        <dbReference type="Rhea" id="RHEA:21032"/>
        <dbReference type="ChEBI" id="CHEBI:15378"/>
        <dbReference type="ChEBI" id="CHEBI:58052"/>
        <dbReference type="ChEBI" id="CHEBI:58223"/>
        <dbReference type="ChEBI" id="CHEBI:132367"/>
        <dbReference type="ChEBI" id="CHEBI:132368"/>
        <dbReference type="EC" id="2.4.1.17"/>
    </reaction>
</comment>
<comment type="subcellular location">
    <subcellularLocation>
        <location evidence="2">Microsome membrane</location>
        <topology evidence="2">Single-pass membrane protein</topology>
    </subcellularLocation>
    <subcellularLocation>
        <location evidence="2">Endoplasmic reticulum membrane</location>
        <topology evidence="2">Single-pass membrane protein</topology>
    </subcellularLocation>
</comment>
<comment type="developmental stage">
    <text>Expressed primarily in adult rabbits.</text>
</comment>
<comment type="similarity">
    <text evidence="2">Belongs to the UDP-glycosyltransferase family.</text>
</comment>
<sequence>MPVKCISVLLLLLQLSCCFSSGSCGKVLVWPMEFSHWMNMKTILDALVQQGHEVTVLRSSASIVIGSNNESGIKFETFHTSYRKDEIENFFMDWFYKMIYNVSIESYWETFSLTKMVILKYSDICEDICKEVILNKKLMTKLQESRFDVVLADPVSPGGELLAELLKIPLVYSLRGFVGYMLQKHGGGLLLPPSYVPVMMSGLGSQMTFMERVQNLLCVLYFDFWFPKFNEKRWDQFYSEVLGRPVTFLELMGKADMWLIRSYWDLEFPRPLLPNFDFIGGLHCKPAKPLPQEMEDFVQSSGEEGVVVFSLGSMISNLTEERANVIASALAQLPQKVLWRFEGKKPDMLGSNTRLYKWIPQNDLLGHPKTKAFITHGGANGVFEAIYHGIPMVGLPLFGDQLDNIVYMKAKGAAVKLNLKTMSSADLLNALKTVINDPSYKENAMTLSRIHHDQPMKPLDRAVFWIEYVMRHKGAKHLRVAAHDLTWYQYHSLDVIGFLLACVAITTYLIVKCCLLVYRYVLGAGKKKKRD</sequence>
<gene>
    <name type="primary">UGT2B13</name>
</gene>
<accession>P36512</accession>
<proteinExistence type="evidence at transcript level"/>